<protein>
    <recommendedName>
        <fullName>Putative phosphoserine aminotransferase</fullName>
        <shortName>PSAT</shortName>
        <ecNumber>2.6.1.52</ecNumber>
    </recommendedName>
    <alternativeName>
        <fullName>Phosphohydroxythreonine aminotransferase</fullName>
    </alternativeName>
</protein>
<proteinExistence type="inferred from homology"/>
<accession>Q10349</accession>
<comment type="function">
    <text evidence="2">Catalyzes the reversible conversion of 3-phosphohydroxypyruvate to phosphoserine and of 3-hydroxy-2-oxo-4-phosphonooxybutanoate to phosphohydroxythreonine.</text>
</comment>
<comment type="catalytic activity">
    <reaction>
        <text>O-phospho-L-serine + 2-oxoglutarate = 3-phosphooxypyruvate + L-glutamate</text>
        <dbReference type="Rhea" id="RHEA:14329"/>
        <dbReference type="ChEBI" id="CHEBI:16810"/>
        <dbReference type="ChEBI" id="CHEBI:18110"/>
        <dbReference type="ChEBI" id="CHEBI:29985"/>
        <dbReference type="ChEBI" id="CHEBI:57524"/>
        <dbReference type="EC" id="2.6.1.52"/>
    </reaction>
</comment>
<comment type="catalytic activity">
    <reaction>
        <text>4-(phosphooxy)-L-threonine + 2-oxoglutarate = (R)-3-hydroxy-2-oxo-4-phosphooxybutanoate + L-glutamate</text>
        <dbReference type="Rhea" id="RHEA:16573"/>
        <dbReference type="ChEBI" id="CHEBI:16810"/>
        <dbReference type="ChEBI" id="CHEBI:29985"/>
        <dbReference type="ChEBI" id="CHEBI:58452"/>
        <dbReference type="ChEBI" id="CHEBI:58538"/>
        <dbReference type="EC" id="2.6.1.52"/>
    </reaction>
</comment>
<comment type="cofactor">
    <cofactor evidence="1">
        <name>pyridoxal 5'-phosphate</name>
        <dbReference type="ChEBI" id="CHEBI:597326"/>
    </cofactor>
    <text evidence="1">Binds 1 pyridoxal phosphate per subunit.</text>
</comment>
<comment type="pathway">
    <text>Amino-acid biosynthesis; L-serine biosynthesis; L-serine from 3-phospho-D-glycerate: step 2/3.</text>
</comment>
<comment type="pathway">
    <text>Cofactor biosynthesis; pyridoxine 5'-phosphate biosynthesis; pyridoxine 5'-phosphate from D-erythrose 4-phosphate: step 3/5.</text>
</comment>
<comment type="subunit">
    <text evidence="1">Homodimer.</text>
</comment>
<comment type="similarity">
    <text evidence="3">Belongs to the class-V pyridoxal-phosphate-dependent aminotransferase family. SerC subfamily.</text>
</comment>
<evidence type="ECO:0000250" key="1"/>
<evidence type="ECO:0000250" key="2">
    <source>
        <dbReference type="UniProtKB" id="P10658"/>
    </source>
</evidence>
<evidence type="ECO:0000305" key="3"/>
<sequence length="389" mass="42798">MSSREEVVNFAAGPAAMITSVVEEFGKDFVNFQGLGMGVAEISHRSKQGSGIVTSAESNFRKLYNIPENFHILFMQGGGTEQFAACLYNVYAHHALKNGNAKSLVANYIITGAWSKKAYAEAERLGFPCHVAVDMKELAGKYGSLPEDKDLKFTPDGETSLVYYCDNETVHGVEFNEPPTNIPKGAIRVCDVSSNFISRKIDFTKHDIIFAGAQKNAGPAGITVVFVRDSVLARPTPAELHKLNIPVSPTVSDYKIMADNHSLYNTLPVATLHAINLGLEYMLEHGGLVALEASSIEKSKLLYDTLDKHDLYISVVEPAARSRMNVTFRIEPQELESEFLAEAEKHHLVQLKGYRSVGGIRASLYNAISVEQTRRLIDLLESFAKAHSN</sequence>
<dbReference type="EC" id="2.6.1.52"/>
<dbReference type="EMBL" id="CU329670">
    <property type="protein sequence ID" value="CAA93811.1"/>
    <property type="molecule type" value="Genomic_DNA"/>
</dbReference>
<dbReference type="PIR" id="T38065">
    <property type="entry name" value="S67450"/>
</dbReference>
<dbReference type="SMR" id="Q10349"/>
<dbReference type="BioGRID" id="278738">
    <property type="interactions" value="9"/>
</dbReference>
<dbReference type="FunCoup" id="Q10349">
    <property type="interactions" value="546"/>
</dbReference>
<dbReference type="IntAct" id="Q10349">
    <property type="interactions" value="1"/>
</dbReference>
<dbReference type="STRING" id="284812.Q10349"/>
<dbReference type="iPTMnet" id="Q10349"/>
<dbReference type="PaxDb" id="4896-SPAC1F12.07.1"/>
<dbReference type="EnsemblFungi" id="SPAC1F12.07.1">
    <property type="protein sequence ID" value="SPAC1F12.07.1:pep"/>
    <property type="gene ID" value="SPAC1F12.07"/>
</dbReference>
<dbReference type="KEGG" id="spo:2542269"/>
<dbReference type="PomBase" id="SPAC1F12.07"/>
<dbReference type="VEuPathDB" id="FungiDB:SPAC1F12.07"/>
<dbReference type="eggNOG" id="KOG2790">
    <property type="taxonomic scope" value="Eukaryota"/>
</dbReference>
<dbReference type="HOGENOM" id="CLU_034866_0_0_1"/>
<dbReference type="InParanoid" id="Q10349"/>
<dbReference type="OMA" id="AFVYFCD"/>
<dbReference type="PhylomeDB" id="Q10349"/>
<dbReference type="Reactome" id="R-SPO-977347">
    <property type="pathway name" value="Serine biosynthesis"/>
</dbReference>
<dbReference type="UniPathway" id="UPA00135">
    <property type="reaction ID" value="UER00197"/>
</dbReference>
<dbReference type="UniPathway" id="UPA00244">
    <property type="reaction ID" value="UER00311"/>
</dbReference>
<dbReference type="PRO" id="PR:Q10349"/>
<dbReference type="Proteomes" id="UP000002485">
    <property type="component" value="Chromosome I"/>
</dbReference>
<dbReference type="GO" id="GO:0005737">
    <property type="term" value="C:cytoplasm"/>
    <property type="evidence" value="ECO:0000318"/>
    <property type="project" value="GO_Central"/>
</dbReference>
<dbReference type="GO" id="GO:0005829">
    <property type="term" value="C:cytosol"/>
    <property type="evidence" value="ECO:0007005"/>
    <property type="project" value="PomBase"/>
</dbReference>
<dbReference type="GO" id="GO:0004648">
    <property type="term" value="F:O-phospho-L-serine:2-oxoglutarate aminotransferase activity"/>
    <property type="evidence" value="ECO:0000318"/>
    <property type="project" value="GO_Central"/>
</dbReference>
<dbReference type="GO" id="GO:0030170">
    <property type="term" value="F:pyridoxal phosphate binding"/>
    <property type="evidence" value="ECO:0000318"/>
    <property type="project" value="GO_Central"/>
</dbReference>
<dbReference type="GO" id="GO:0006564">
    <property type="term" value="P:L-serine biosynthetic process"/>
    <property type="evidence" value="ECO:0000318"/>
    <property type="project" value="GO_Central"/>
</dbReference>
<dbReference type="FunFam" id="3.40.640.10:FF:000010">
    <property type="entry name" value="Phosphoserine aminotransferase"/>
    <property type="match status" value="1"/>
</dbReference>
<dbReference type="FunFam" id="3.90.1150.10:FF:000006">
    <property type="entry name" value="Phosphoserine aminotransferase"/>
    <property type="match status" value="1"/>
</dbReference>
<dbReference type="Gene3D" id="3.90.1150.10">
    <property type="entry name" value="Aspartate Aminotransferase, domain 1"/>
    <property type="match status" value="1"/>
</dbReference>
<dbReference type="Gene3D" id="3.40.640.10">
    <property type="entry name" value="Type I PLP-dependent aspartate aminotransferase-like (Major domain)"/>
    <property type="match status" value="1"/>
</dbReference>
<dbReference type="HAMAP" id="MF_00160">
    <property type="entry name" value="SerC_aminotrans_5"/>
    <property type="match status" value="1"/>
</dbReference>
<dbReference type="InterPro" id="IPR000192">
    <property type="entry name" value="Aminotrans_V_dom"/>
</dbReference>
<dbReference type="InterPro" id="IPR020578">
    <property type="entry name" value="Aminotrans_V_PyrdxlP_BS"/>
</dbReference>
<dbReference type="InterPro" id="IPR022278">
    <property type="entry name" value="Pser_aminoTfrase"/>
</dbReference>
<dbReference type="InterPro" id="IPR015424">
    <property type="entry name" value="PyrdxlP-dep_Trfase"/>
</dbReference>
<dbReference type="InterPro" id="IPR015421">
    <property type="entry name" value="PyrdxlP-dep_Trfase_major"/>
</dbReference>
<dbReference type="InterPro" id="IPR015422">
    <property type="entry name" value="PyrdxlP-dep_Trfase_small"/>
</dbReference>
<dbReference type="NCBIfam" id="NF003764">
    <property type="entry name" value="PRK05355.1"/>
    <property type="match status" value="1"/>
</dbReference>
<dbReference type="NCBIfam" id="TIGR01364">
    <property type="entry name" value="serC_1"/>
    <property type="match status" value="1"/>
</dbReference>
<dbReference type="PANTHER" id="PTHR43247">
    <property type="entry name" value="PHOSPHOSERINE AMINOTRANSFERASE"/>
    <property type="match status" value="1"/>
</dbReference>
<dbReference type="PANTHER" id="PTHR43247:SF1">
    <property type="entry name" value="PHOSPHOSERINE AMINOTRANSFERASE"/>
    <property type="match status" value="1"/>
</dbReference>
<dbReference type="Pfam" id="PF00266">
    <property type="entry name" value="Aminotran_5"/>
    <property type="match status" value="1"/>
</dbReference>
<dbReference type="PIRSF" id="PIRSF000525">
    <property type="entry name" value="SerC"/>
    <property type="match status" value="1"/>
</dbReference>
<dbReference type="SUPFAM" id="SSF53383">
    <property type="entry name" value="PLP-dependent transferases"/>
    <property type="match status" value="1"/>
</dbReference>
<dbReference type="PROSITE" id="PS00595">
    <property type="entry name" value="AA_TRANSFER_CLASS_5"/>
    <property type="match status" value="1"/>
</dbReference>
<feature type="chain" id="PRO_0000150140" description="Putative phosphoserine aminotransferase">
    <location>
        <begin position="1"/>
        <end position="389"/>
    </location>
</feature>
<feature type="binding site" evidence="1">
    <location>
        <position position="45"/>
    </location>
    <ligand>
        <name>L-glutamate</name>
        <dbReference type="ChEBI" id="CHEBI:29985"/>
    </ligand>
</feature>
<feature type="binding site" evidence="1">
    <location>
        <begin position="79"/>
        <end position="80"/>
    </location>
    <ligand>
        <name>pyridoxal 5'-phosphate</name>
        <dbReference type="ChEBI" id="CHEBI:597326"/>
    </ligand>
</feature>
<feature type="binding site" evidence="1">
    <location>
        <position position="114"/>
    </location>
    <ligand>
        <name>pyridoxal 5'-phosphate</name>
        <dbReference type="ChEBI" id="CHEBI:597326"/>
    </ligand>
</feature>
<feature type="binding site" evidence="1">
    <location>
        <position position="169"/>
    </location>
    <ligand>
        <name>pyridoxal 5'-phosphate</name>
        <dbReference type="ChEBI" id="CHEBI:597326"/>
    </ligand>
</feature>
<feature type="binding site" evidence="1">
    <location>
        <position position="191"/>
    </location>
    <ligand>
        <name>pyridoxal 5'-phosphate</name>
        <dbReference type="ChEBI" id="CHEBI:597326"/>
    </ligand>
</feature>
<feature type="binding site" evidence="1">
    <location>
        <position position="214"/>
    </location>
    <ligand>
        <name>pyridoxal 5'-phosphate</name>
        <dbReference type="ChEBI" id="CHEBI:597326"/>
    </ligand>
</feature>
<feature type="binding site" evidence="1">
    <location>
        <begin position="265"/>
        <end position="266"/>
    </location>
    <ligand>
        <name>pyridoxal 5'-phosphate</name>
        <dbReference type="ChEBI" id="CHEBI:597326"/>
    </ligand>
</feature>
<feature type="modified residue" description="N6-(pyridoxal phosphate)lysine" evidence="1">
    <location>
        <position position="215"/>
    </location>
</feature>
<reference key="1">
    <citation type="journal article" date="2002" name="Nature">
        <title>The genome sequence of Schizosaccharomyces pombe.</title>
        <authorList>
            <person name="Wood V."/>
            <person name="Gwilliam R."/>
            <person name="Rajandream M.A."/>
            <person name="Lyne M.H."/>
            <person name="Lyne R."/>
            <person name="Stewart A."/>
            <person name="Sgouros J.G."/>
            <person name="Peat N."/>
            <person name="Hayles J."/>
            <person name="Baker S.G."/>
            <person name="Basham D."/>
            <person name="Bowman S."/>
            <person name="Brooks K."/>
            <person name="Brown D."/>
            <person name="Brown S."/>
            <person name="Chillingworth T."/>
            <person name="Churcher C.M."/>
            <person name="Collins M."/>
            <person name="Connor R."/>
            <person name="Cronin A."/>
            <person name="Davis P."/>
            <person name="Feltwell T."/>
            <person name="Fraser A."/>
            <person name="Gentles S."/>
            <person name="Goble A."/>
            <person name="Hamlin N."/>
            <person name="Harris D.E."/>
            <person name="Hidalgo J."/>
            <person name="Hodgson G."/>
            <person name="Holroyd S."/>
            <person name="Hornsby T."/>
            <person name="Howarth S."/>
            <person name="Huckle E.J."/>
            <person name="Hunt S."/>
            <person name="Jagels K."/>
            <person name="James K.D."/>
            <person name="Jones L."/>
            <person name="Jones M."/>
            <person name="Leather S."/>
            <person name="McDonald S."/>
            <person name="McLean J."/>
            <person name="Mooney P."/>
            <person name="Moule S."/>
            <person name="Mungall K.L."/>
            <person name="Murphy L.D."/>
            <person name="Niblett D."/>
            <person name="Odell C."/>
            <person name="Oliver K."/>
            <person name="O'Neil S."/>
            <person name="Pearson D."/>
            <person name="Quail M.A."/>
            <person name="Rabbinowitsch E."/>
            <person name="Rutherford K.M."/>
            <person name="Rutter S."/>
            <person name="Saunders D."/>
            <person name="Seeger K."/>
            <person name="Sharp S."/>
            <person name="Skelton J."/>
            <person name="Simmonds M.N."/>
            <person name="Squares R."/>
            <person name="Squares S."/>
            <person name="Stevens K."/>
            <person name="Taylor K."/>
            <person name="Taylor R.G."/>
            <person name="Tivey A."/>
            <person name="Walsh S.V."/>
            <person name="Warren T."/>
            <person name="Whitehead S."/>
            <person name="Woodward J.R."/>
            <person name="Volckaert G."/>
            <person name="Aert R."/>
            <person name="Robben J."/>
            <person name="Grymonprez B."/>
            <person name="Weltjens I."/>
            <person name="Vanstreels E."/>
            <person name="Rieger M."/>
            <person name="Schaefer M."/>
            <person name="Mueller-Auer S."/>
            <person name="Gabel C."/>
            <person name="Fuchs M."/>
            <person name="Duesterhoeft A."/>
            <person name="Fritzc C."/>
            <person name="Holzer E."/>
            <person name="Moestl D."/>
            <person name="Hilbert H."/>
            <person name="Borzym K."/>
            <person name="Langer I."/>
            <person name="Beck A."/>
            <person name="Lehrach H."/>
            <person name="Reinhardt R."/>
            <person name="Pohl T.M."/>
            <person name="Eger P."/>
            <person name="Zimmermann W."/>
            <person name="Wedler H."/>
            <person name="Wambutt R."/>
            <person name="Purnelle B."/>
            <person name="Goffeau A."/>
            <person name="Cadieu E."/>
            <person name="Dreano S."/>
            <person name="Gloux S."/>
            <person name="Lelaure V."/>
            <person name="Mottier S."/>
            <person name="Galibert F."/>
            <person name="Aves S.J."/>
            <person name="Xiang Z."/>
            <person name="Hunt C."/>
            <person name="Moore K."/>
            <person name="Hurst S.M."/>
            <person name="Lucas M."/>
            <person name="Rochet M."/>
            <person name="Gaillardin C."/>
            <person name="Tallada V.A."/>
            <person name="Garzon A."/>
            <person name="Thode G."/>
            <person name="Daga R.R."/>
            <person name="Cruzado L."/>
            <person name="Jimenez J."/>
            <person name="Sanchez M."/>
            <person name="del Rey F."/>
            <person name="Benito J."/>
            <person name="Dominguez A."/>
            <person name="Revuelta J.L."/>
            <person name="Moreno S."/>
            <person name="Armstrong J."/>
            <person name="Forsburg S.L."/>
            <person name="Cerutti L."/>
            <person name="Lowe T."/>
            <person name="McCombie W.R."/>
            <person name="Paulsen I."/>
            <person name="Potashkin J."/>
            <person name="Shpakovski G.V."/>
            <person name="Ussery D."/>
            <person name="Barrell B.G."/>
            <person name="Nurse P."/>
        </authorList>
    </citation>
    <scope>NUCLEOTIDE SEQUENCE [LARGE SCALE GENOMIC DNA]</scope>
    <source>
        <strain>972 / ATCC 24843</strain>
    </source>
</reference>
<keyword id="KW-0028">Amino-acid biosynthesis</keyword>
<keyword id="KW-0032">Aminotransferase</keyword>
<keyword id="KW-0663">Pyridoxal phosphate</keyword>
<keyword id="KW-1185">Reference proteome</keyword>
<keyword id="KW-0718">Serine biosynthesis</keyword>
<keyword id="KW-0808">Transferase</keyword>
<organism>
    <name type="scientific">Schizosaccharomyces pombe (strain 972 / ATCC 24843)</name>
    <name type="common">Fission yeast</name>
    <dbReference type="NCBI Taxonomy" id="284812"/>
    <lineage>
        <taxon>Eukaryota</taxon>
        <taxon>Fungi</taxon>
        <taxon>Dikarya</taxon>
        <taxon>Ascomycota</taxon>
        <taxon>Taphrinomycotina</taxon>
        <taxon>Schizosaccharomycetes</taxon>
        <taxon>Schizosaccharomycetales</taxon>
        <taxon>Schizosaccharomycetaceae</taxon>
        <taxon>Schizosaccharomyces</taxon>
    </lineage>
</organism>
<name>SERC_SCHPO</name>
<gene>
    <name type="ORF">SPAC1F12.07</name>
</gene>